<feature type="chain" id="PRO_0000351036" description="DNA-directed RNA polymerase III subunit RPC3">
    <location>
        <begin position="1"/>
        <end position="610"/>
    </location>
</feature>
<feature type="region of interest" description="Leucine-zipper">
    <location>
        <begin position="538"/>
        <end position="559"/>
    </location>
</feature>
<protein>
    <recommendedName>
        <fullName>DNA-directed RNA polymerase III subunit RPC3</fullName>
        <shortName>RNA polymerase III subunit C3</shortName>
    </recommendedName>
</protein>
<keyword id="KW-0240">DNA-directed RNA polymerase</keyword>
<keyword id="KW-0539">Nucleus</keyword>
<keyword id="KW-1185">Reference proteome</keyword>
<keyword id="KW-0804">Transcription</keyword>
<keyword id="KW-0862">Zinc</keyword>
<sequence>MDEDYYSAVRAQSPKTYLYALTAETHLGEVASVIITTLLASGRLNIKQISVKTKLAIKSIKSAIVSLIQLNCLYYWQDDKNPTIFYYSVNETGLKTLVYSGDILNHITQEYGDEEAEIIQNIIMNGHLKLDDYLRQYDNDLEKSDEASLRLEKEKIFLKLYNEGWIKILSLNDFHHINDIWEKLFDDTLRNTPRSSTTSEVKRLAEAQSVCKEKLMALLEKTKQPLDLYITENGYKKLNPNLVLTFNLTRFQKRSRTVALTNLAKSRIGLITSKVYEAALKSVENGSPDLSHPFLEIPGLINNPTDVKDFKDSLETTLTAEKKIVFTVKDVMRYFPKLLDIKNSVITENSKRSFNDINANPETSNKKIKLENGNAFNTGGGASGANTSNSNNHLTASSFFTDEDRMSIIEQHLRLLAAGTNTQFVHEISPGRYAIPFVKLSNELKQFHYESLVKSTLQDQAFRVLRCIKHLKLADEKSIANAVLLKEKTVRNEVYQLIKANVVEIQEIPRSVDRAASKTFYLVKYKEYHRFESLINCLVYNMAEIVRNIQNFKMENKILLDKCNRVDVEGNEDEMLLDSELKTLHGLQNREVMNLVRFNRTRSLWDIFTL</sequence>
<dbReference type="EMBL" id="CH981524">
    <property type="protein sequence ID" value="EDK41832.1"/>
    <property type="molecule type" value="Genomic_DNA"/>
</dbReference>
<dbReference type="RefSeq" id="XP_001527490.1">
    <property type="nucleotide sequence ID" value="XM_001527440.1"/>
</dbReference>
<dbReference type="SMR" id="A5DRM4"/>
<dbReference type="FunCoup" id="A5DRM4">
    <property type="interactions" value="485"/>
</dbReference>
<dbReference type="STRING" id="379508.A5DRM4"/>
<dbReference type="GeneID" id="5235812"/>
<dbReference type="KEGG" id="lel:PVL30_000015"/>
<dbReference type="VEuPathDB" id="FungiDB:LELG_00010"/>
<dbReference type="eggNOG" id="KOG2587">
    <property type="taxonomic scope" value="Eukaryota"/>
</dbReference>
<dbReference type="HOGENOM" id="CLU_010734_0_0_1"/>
<dbReference type="InParanoid" id="A5DRM4"/>
<dbReference type="OMA" id="KHRFVRH"/>
<dbReference type="OrthoDB" id="272392at2759"/>
<dbReference type="Proteomes" id="UP000001996">
    <property type="component" value="Unassembled WGS sequence"/>
</dbReference>
<dbReference type="GO" id="GO:0005666">
    <property type="term" value="C:RNA polymerase III complex"/>
    <property type="evidence" value="ECO:0007669"/>
    <property type="project" value="EnsemblFungi"/>
</dbReference>
<dbReference type="GO" id="GO:0003899">
    <property type="term" value="F:DNA-directed RNA polymerase activity"/>
    <property type="evidence" value="ECO:0007669"/>
    <property type="project" value="EnsemblFungi"/>
</dbReference>
<dbReference type="GO" id="GO:0003697">
    <property type="term" value="F:single-stranded DNA binding"/>
    <property type="evidence" value="ECO:0007669"/>
    <property type="project" value="InterPro"/>
</dbReference>
<dbReference type="GO" id="GO:0006386">
    <property type="term" value="P:termination of RNA polymerase III transcription"/>
    <property type="evidence" value="ECO:0007669"/>
    <property type="project" value="EnsemblFungi"/>
</dbReference>
<dbReference type="GO" id="GO:0006384">
    <property type="term" value="P:transcription initiation at RNA polymerase III promoter"/>
    <property type="evidence" value="ECO:0007669"/>
    <property type="project" value="EnsemblFungi"/>
</dbReference>
<dbReference type="GO" id="GO:0042797">
    <property type="term" value="P:tRNA transcription by RNA polymerase III"/>
    <property type="evidence" value="ECO:0007669"/>
    <property type="project" value="EnsemblFungi"/>
</dbReference>
<dbReference type="Gene3D" id="1.10.10.10">
    <property type="entry name" value="Winged helix-like DNA-binding domain superfamily/Winged helix DNA-binding domain"/>
    <property type="match status" value="2"/>
</dbReference>
<dbReference type="InterPro" id="IPR055207">
    <property type="entry name" value="POLR3C_WHD"/>
</dbReference>
<dbReference type="InterPro" id="IPR013197">
    <property type="entry name" value="RNA_pol_III_RPC82-rel_HTH"/>
</dbReference>
<dbReference type="InterPro" id="IPR008806">
    <property type="entry name" value="RNA_pol_III_Rpc82_C"/>
</dbReference>
<dbReference type="InterPro" id="IPR039748">
    <property type="entry name" value="RPC3"/>
</dbReference>
<dbReference type="InterPro" id="IPR036388">
    <property type="entry name" value="WH-like_DNA-bd_sf"/>
</dbReference>
<dbReference type="PANTHER" id="PTHR12949:SF0">
    <property type="entry name" value="DNA-DIRECTED RNA POLYMERASE III SUBUNIT RPC3"/>
    <property type="match status" value="1"/>
</dbReference>
<dbReference type="PANTHER" id="PTHR12949">
    <property type="entry name" value="RNA POLYMERASE III DNA DIRECTED -RELATED"/>
    <property type="match status" value="1"/>
</dbReference>
<dbReference type="Pfam" id="PF08221">
    <property type="entry name" value="HTH_9"/>
    <property type="match status" value="1"/>
</dbReference>
<dbReference type="Pfam" id="PF22536">
    <property type="entry name" value="POLR3C_WHD"/>
    <property type="match status" value="1"/>
</dbReference>
<dbReference type="Pfam" id="PF05645">
    <property type="entry name" value="RNA_pol_Rpc82"/>
    <property type="match status" value="1"/>
</dbReference>
<dbReference type="Pfam" id="PF20912">
    <property type="entry name" value="RPC3_helical"/>
    <property type="match status" value="1"/>
</dbReference>
<reference key="1">
    <citation type="journal article" date="2009" name="Nature">
        <title>Evolution of pathogenicity and sexual reproduction in eight Candida genomes.</title>
        <authorList>
            <person name="Butler G."/>
            <person name="Rasmussen M.D."/>
            <person name="Lin M.F."/>
            <person name="Santos M.A.S."/>
            <person name="Sakthikumar S."/>
            <person name="Munro C.A."/>
            <person name="Rheinbay E."/>
            <person name="Grabherr M."/>
            <person name="Forche A."/>
            <person name="Reedy J.L."/>
            <person name="Agrafioti I."/>
            <person name="Arnaud M.B."/>
            <person name="Bates S."/>
            <person name="Brown A.J.P."/>
            <person name="Brunke S."/>
            <person name="Costanzo M.C."/>
            <person name="Fitzpatrick D.A."/>
            <person name="de Groot P.W.J."/>
            <person name="Harris D."/>
            <person name="Hoyer L.L."/>
            <person name="Hube B."/>
            <person name="Klis F.M."/>
            <person name="Kodira C."/>
            <person name="Lennard N."/>
            <person name="Logue M.E."/>
            <person name="Martin R."/>
            <person name="Neiman A.M."/>
            <person name="Nikolaou E."/>
            <person name="Quail M.A."/>
            <person name="Quinn J."/>
            <person name="Santos M.C."/>
            <person name="Schmitzberger F.F."/>
            <person name="Sherlock G."/>
            <person name="Shah P."/>
            <person name="Silverstein K.A.T."/>
            <person name="Skrzypek M.S."/>
            <person name="Soll D."/>
            <person name="Staggs R."/>
            <person name="Stansfield I."/>
            <person name="Stumpf M.P.H."/>
            <person name="Sudbery P.E."/>
            <person name="Srikantha T."/>
            <person name="Zeng Q."/>
            <person name="Berman J."/>
            <person name="Berriman M."/>
            <person name="Heitman J."/>
            <person name="Gow N.A.R."/>
            <person name="Lorenz M.C."/>
            <person name="Birren B.W."/>
            <person name="Kellis M."/>
            <person name="Cuomo C.A."/>
        </authorList>
    </citation>
    <scope>NUCLEOTIDE SEQUENCE [LARGE SCALE GENOMIC DNA]</scope>
    <source>
        <strain>ATCC 11503 / BCRC 21390 / CBS 2605 / JCM 1781 / NBRC 1676 / NRRL YB-4239</strain>
    </source>
</reference>
<evidence type="ECO:0000250" key="1"/>
<evidence type="ECO:0000305" key="2"/>
<comment type="function">
    <text evidence="1">DNA-dependent RNA polymerase catalyzes the transcription of DNA into RNA using the four ribonucleoside triphosphates as substrates. Specific core component of RNA polymerase III which synthesizes small RNAs, such as 5S rRNA and tRNAs (By similarity).</text>
</comment>
<comment type="subunit">
    <text evidence="1">Component of the RNA polymerase III (Pol III) complex consisting of 17 subunits.</text>
</comment>
<comment type="subcellular location">
    <subcellularLocation>
        <location evidence="1">Nucleus</location>
    </subcellularLocation>
</comment>
<comment type="similarity">
    <text evidence="2">Belongs to the RNA polymerase beta chain family.</text>
</comment>
<name>RPC3_LODEL</name>
<organism>
    <name type="scientific">Lodderomyces elongisporus (strain ATCC 11503 / CBS 2605 / JCM 1781 / NBRC 1676 / NRRL YB-4239)</name>
    <name type="common">Yeast</name>
    <name type="synonym">Saccharomyces elongisporus</name>
    <dbReference type="NCBI Taxonomy" id="379508"/>
    <lineage>
        <taxon>Eukaryota</taxon>
        <taxon>Fungi</taxon>
        <taxon>Dikarya</taxon>
        <taxon>Ascomycota</taxon>
        <taxon>Saccharomycotina</taxon>
        <taxon>Pichiomycetes</taxon>
        <taxon>Debaryomycetaceae</taxon>
        <taxon>Candida/Lodderomyces clade</taxon>
        <taxon>Lodderomyces</taxon>
    </lineage>
</organism>
<gene>
    <name type="primary">RPC82</name>
    <name type="synonym">RPC3</name>
    <name type="ORF">LELG_00010</name>
</gene>
<accession>A5DRM4</accession>
<proteinExistence type="inferred from homology"/>